<reference key="1">
    <citation type="journal article" date="1990" name="Nucleic Acids Res.">
        <title>Nucleotide sequence encoding for non-toxic phospholipase-A2 from Bungarus multicinctus.</title>
        <authorList>
            <person name="Danse J.-M."/>
        </authorList>
    </citation>
    <scope>NUCLEOTIDE SEQUENCE [MRNA]</scope>
    <source>
        <tissue>Venom gland</tissue>
    </source>
</reference>
<reference key="2">
    <citation type="journal article" date="1981" name="J. Biochem.">
        <title>Amino acid sequence of phospholipase A from Bungarus multicinctus venom.</title>
        <authorList>
            <person name="Kondo K."/>
            <person name="Toda H."/>
            <person name="Narita K."/>
        </authorList>
    </citation>
    <scope>PROTEIN SEQUENCE OF 28-145</scope>
    <source>
        <tissue>Venom</tissue>
    </source>
</reference>
<organism>
    <name type="scientific">Bungarus multicinctus</name>
    <name type="common">Many-banded krait</name>
    <dbReference type="NCBI Taxonomy" id="8616"/>
    <lineage>
        <taxon>Eukaryota</taxon>
        <taxon>Metazoa</taxon>
        <taxon>Chordata</taxon>
        <taxon>Craniata</taxon>
        <taxon>Vertebrata</taxon>
        <taxon>Euteleostomi</taxon>
        <taxon>Lepidosauria</taxon>
        <taxon>Squamata</taxon>
        <taxon>Bifurcata</taxon>
        <taxon>Unidentata</taxon>
        <taxon>Episquamata</taxon>
        <taxon>Toxicofera</taxon>
        <taxon>Serpentes</taxon>
        <taxon>Colubroidea</taxon>
        <taxon>Elapidae</taxon>
        <taxon>Bungarinae</taxon>
        <taxon>Bungarus</taxon>
    </lineage>
</organism>
<comment type="function">
    <text>PLA2 catalyzes the calcium-dependent hydrolysis of the 2-acyl groups in 3-sn-phosphoglycerides.</text>
</comment>
<comment type="catalytic activity">
    <reaction evidence="3 4">
        <text>a 1,2-diacyl-sn-glycero-3-phosphocholine + H2O = a 1-acyl-sn-glycero-3-phosphocholine + a fatty acid + H(+)</text>
        <dbReference type="Rhea" id="RHEA:15801"/>
        <dbReference type="ChEBI" id="CHEBI:15377"/>
        <dbReference type="ChEBI" id="CHEBI:15378"/>
        <dbReference type="ChEBI" id="CHEBI:28868"/>
        <dbReference type="ChEBI" id="CHEBI:57643"/>
        <dbReference type="ChEBI" id="CHEBI:58168"/>
        <dbReference type="EC" id="3.1.1.4"/>
    </reaction>
</comment>
<comment type="cofactor">
    <cofactor evidence="1">
        <name>Ca(2+)</name>
        <dbReference type="ChEBI" id="CHEBI:29108"/>
    </cofactor>
    <text evidence="1">Binds 1 Ca(2+) ion.</text>
</comment>
<comment type="subcellular location">
    <subcellularLocation>
        <location>Secreted</location>
    </subcellularLocation>
</comment>
<comment type="tissue specificity">
    <text>Expressed by the venom gland.</text>
</comment>
<comment type="similarity">
    <text evidence="6">Belongs to the phospholipase A2 family. Group I subfamily. D49 sub-subfamily.</text>
</comment>
<proteinExistence type="evidence at protein level"/>
<sequence>MNPAHLLILSAVCVSLLGAANVPPQHLNLYQFKNMIVCAGTRPWIGYVNYGCYCGAGGSGTPVDELDRCCYVHDNCYGEAEKIPGCNPKTKTYSYTCTKPNLTCTDAAGTCARIVCDCDRTAAICFAAAPYNINNFMISSSTHCQ</sequence>
<protein>
    <recommendedName>
        <fullName>Acidic phospholipase A2</fullName>
        <shortName>svPLA2</shortName>
        <ecNumber>3.1.1.4</ecNumber>
    </recommendedName>
    <alternativeName>
        <fullName>Phosphatidylcholine 2-acylhydrolase</fullName>
    </alternativeName>
</protein>
<accession>P00606</accession>
<keyword id="KW-0106">Calcium</keyword>
<keyword id="KW-0903">Direct protein sequencing</keyword>
<keyword id="KW-1015">Disulfide bond</keyword>
<keyword id="KW-0378">Hydrolase</keyword>
<keyword id="KW-0442">Lipid degradation</keyword>
<keyword id="KW-0443">Lipid metabolism</keyword>
<keyword id="KW-0479">Metal-binding</keyword>
<keyword id="KW-0964">Secreted</keyword>
<keyword id="KW-0732">Signal</keyword>
<dbReference type="EC" id="3.1.1.4"/>
<dbReference type="EMBL" id="X53406">
    <property type="protein sequence ID" value="CAA37482.1"/>
    <property type="molecule type" value="mRNA"/>
</dbReference>
<dbReference type="PIR" id="S10981">
    <property type="entry name" value="PSKF2U"/>
</dbReference>
<dbReference type="SMR" id="P00606"/>
<dbReference type="GO" id="GO:0005576">
    <property type="term" value="C:extracellular region"/>
    <property type="evidence" value="ECO:0007669"/>
    <property type="project" value="UniProtKB-SubCell"/>
</dbReference>
<dbReference type="GO" id="GO:0005509">
    <property type="term" value="F:calcium ion binding"/>
    <property type="evidence" value="ECO:0007669"/>
    <property type="project" value="InterPro"/>
</dbReference>
<dbReference type="GO" id="GO:0047498">
    <property type="term" value="F:calcium-dependent phospholipase A2 activity"/>
    <property type="evidence" value="ECO:0007669"/>
    <property type="project" value="TreeGrafter"/>
</dbReference>
<dbReference type="GO" id="GO:0005543">
    <property type="term" value="F:phospholipid binding"/>
    <property type="evidence" value="ECO:0007669"/>
    <property type="project" value="TreeGrafter"/>
</dbReference>
<dbReference type="GO" id="GO:0050482">
    <property type="term" value="P:arachidonate secretion"/>
    <property type="evidence" value="ECO:0007669"/>
    <property type="project" value="InterPro"/>
</dbReference>
<dbReference type="GO" id="GO:0016042">
    <property type="term" value="P:lipid catabolic process"/>
    <property type="evidence" value="ECO:0007669"/>
    <property type="project" value="UniProtKB-KW"/>
</dbReference>
<dbReference type="GO" id="GO:0006644">
    <property type="term" value="P:phospholipid metabolic process"/>
    <property type="evidence" value="ECO:0007669"/>
    <property type="project" value="InterPro"/>
</dbReference>
<dbReference type="CDD" id="cd00125">
    <property type="entry name" value="PLA2c"/>
    <property type="match status" value="1"/>
</dbReference>
<dbReference type="FunFam" id="1.20.90.10:FF:000007">
    <property type="entry name" value="Acidic phospholipase A2"/>
    <property type="match status" value="1"/>
</dbReference>
<dbReference type="Gene3D" id="1.20.90.10">
    <property type="entry name" value="Phospholipase A2 domain"/>
    <property type="match status" value="1"/>
</dbReference>
<dbReference type="InterPro" id="IPR001211">
    <property type="entry name" value="PLipase_A2"/>
</dbReference>
<dbReference type="InterPro" id="IPR033112">
    <property type="entry name" value="PLipase_A2_Asp_AS"/>
</dbReference>
<dbReference type="InterPro" id="IPR016090">
    <property type="entry name" value="PLipase_A2_dom"/>
</dbReference>
<dbReference type="InterPro" id="IPR036444">
    <property type="entry name" value="PLipase_A2_dom_sf"/>
</dbReference>
<dbReference type="InterPro" id="IPR033113">
    <property type="entry name" value="PLipase_A2_His_AS"/>
</dbReference>
<dbReference type="PANTHER" id="PTHR11716:SF94">
    <property type="entry name" value="PHOSPHOLIPASE A2"/>
    <property type="match status" value="1"/>
</dbReference>
<dbReference type="PANTHER" id="PTHR11716">
    <property type="entry name" value="PHOSPHOLIPASE A2 FAMILY MEMBER"/>
    <property type="match status" value="1"/>
</dbReference>
<dbReference type="Pfam" id="PF00068">
    <property type="entry name" value="Phospholip_A2_1"/>
    <property type="match status" value="1"/>
</dbReference>
<dbReference type="PRINTS" id="PR00389">
    <property type="entry name" value="PHPHLIPASEA2"/>
</dbReference>
<dbReference type="SMART" id="SM00085">
    <property type="entry name" value="PA2c"/>
    <property type="match status" value="1"/>
</dbReference>
<dbReference type="SUPFAM" id="SSF48619">
    <property type="entry name" value="Phospholipase A2, PLA2"/>
    <property type="match status" value="1"/>
</dbReference>
<dbReference type="PROSITE" id="PS00119">
    <property type="entry name" value="PA2_ASP"/>
    <property type="match status" value="1"/>
</dbReference>
<dbReference type="PROSITE" id="PS00118">
    <property type="entry name" value="PA2_HIS"/>
    <property type="match status" value="1"/>
</dbReference>
<name>PA2A_BUNMU</name>
<evidence type="ECO:0000250" key="1"/>
<evidence type="ECO:0000255" key="2"/>
<evidence type="ECO:0000255" key="3">
    <source>
        <dbReference type="PROSITE-ProRule" id="PRU10035"/>
    </source>
</evidence>
<evidence type="ECO:0000255" key="4">
    <source>
        <dbReference type="PROSITE-ProRule" id="PRU10036"/>
    </source>
</evidence>
<evidence type="ECO:0000269" key="5">
    <source>
    </source>
</evidence>
<evidence type="ECO:0000305" key="6"/>
<feature type="signal peptide" evidence="2">
    <location>
        <begin position="1"/>
        <end position="19"/>
    </location>
</feature>
<feature type="propeptide" id="PRO_0000022833" evidence="5">
    <location>
        <begin position="20"/>
        <end position="27"/>
    </location>
</feature>
<feature type="chain" id="PRO_0000022834" description="Acidic phospholipase A2">
    <location>
        <begin position="28"/>
        <end position="145"/>
    </location>
</feature>
<feature type="active site" evidence="1">
    <location>
        <position position="73"/>
    </location>
</feature>
<feature type="active site" evidence="1">
    <location>
        <position position="119"/>
    </location>
</feature>
<feature type="binding site" evidence="1">
    <location>
        <position position="53"/>
    </location>
    <ligand>
        <name>Ca(2+)</name>
        <dbReference type="ChEBI" id="CHEBI:29108"/>
    </ligand>
</feature>
<feature type="binding site" evidence="1">
    <location>
        <position position="55"/>
    </location>
    <ligand>
        <name>Ca(2+)</name>
        <dbReference type="ChEBI" id="CHEBI:29108"/>
    </ligand>
</feature>
<feature type="binding site" evidence="1">
    <location>
        <position position="57"/>
    </location>
    <ligand>
        <name>Ca(2+)</name>
        <dbReference type="ChEBI" id="CHEBI:29108"/>
    </ligand>
</feature>
<feature type="binding site" evidence="1">
    <location>
        <position position="74"/>
    </location>
    <ligand>
        <name>Ca(2+)</name>
        <dbReference type="ChEBI" id="CHEBI:29108"/>
    </ligand>
</feature>
<feature type="disulfide bond" evidence="1">
    <location>
        <begin position="38"/>
        <end position="97"/>
    </location>
</feature>
<feature type="disulfide bond" evidence="1">
    <location>
        <begin position="52"/>
        <end position="144"/>
    </location>
</feature>
<feature type="disulfide bond" evidence="1">
    <location>
        <begin position="54"/>
        <end position="70"/>
    </location>
</feature>
<feature type="disulfide bond" evidence="1">
    <location>
        <begin position="69"/>
        <end position="125"/>
    </location>
</feature>
<feature type="disulfide bond" evidence="1">
    <location>
        <begin position="76"/>
        <end position="118"/>
    </location>
</feature>
<feature type="disulfide bond" evidence="1">
    <location>
        <begin position="86"/>
        <end position="111"/>
    </location>
</feature>
<feature type="disulfide bond" evidence="1">
    <location>
        <begin position="104"/>
        <end position="116"/>
    </location>
</feature>